<comment type="function">
    <text evidence="1">Decarboxylates ethylmalonyl-CoA, a potentially toxic metabolite, to form butyryl-CoA, suggesting it might be involved in metabolite proofreading. Acts preferentially on (S)-ethylmalonyl-CoA but also has some activity on the (R)-isomer. Also has methylmalonyl-CoA decarboxylase activity at lower level.</text>
</comment>
<comment type="catalytic activity">
    <reaction evidence="1">
        <text>(2S)-ethylmalonyl-CoA + H(+) = butanoyl-CoA + CO2</text>
        <dbReference type="Rhea" id="RHEA:32131"/>
        <dbReference type="ChEBI" id="CHEBI:15378"/>
        <dbReference type="ChEBI" id="CHEBI:16526"/>
        <dbReference type="ChEBI" id="CHEBI:57371"/>
        <dbReference type="ChEBI" id="CHEBI:60909"/>
        <dbReference type="EC" id="4.1.1.94"/>
    </reaction>
    <physiologicalReaction direction="left-to-right" evidence="1">
        <dbReference type="Rhea" id="RHEA:32132"/>
    </physiologicalReaction>
</comment>
<comment type="catalytic activity">
    <reaction evidence="1">
        <text>(S)-methylmalonyl-CoA + H(+) = propanoyl-CoA + CO2</text>
        <dbReference type="Rhea" id="RHEA:61340"/>
        <dbReference type="ChEBI" id="CHEBI:15378"/>
        <dbReference type="ChEBI" id="CHEBI:16526"/>
        <dbReference type="ChEBI" id="CHEBI:57327"/>
        <dbReference type="ChEBI" id="CHEBI:57392"/>
        <dbReference type="EC" id="4.1.1.94"/>
    </reaction>
    <physiologicalReaction direction="left-to-right" evidence="1">
        <dbReference type="Rhea" id="RHEA:61341"/>
    </physiologicalReaction>
</comment>
<comment type="catalytic activity">
    <reaction evidence="1">
        <text>(2R)-ethylmalonyl-CoA + H(+) = butanoyl-CoA + CO2</text>
        <dbReference type="Rhea" id="RHEA:59540"/>
        <dbReference type="ChEBI" id="CHEBI:15378"/>
        <dbReference type="ChEBI" id="CHEBI:16526"/>
        <dbReference type="ChEBI" id="CHEBI:57371"/>
        <dbReference type="ChEBI" id="CHEBI:85316"/>
        <dbReference type="EC" id="4.1.1.94"/>
    </reaction>
    <physiologicalReaction direction="left-to-right" evidence="1">
        <dbReference type="Rhea" id="RHEA:59541"/>
    </physiologicalReaction>
</comment>
<comment type="subcellular location">
    <subcellularLocation>
        <location evidence="1">Cytoplasm</location>
        <location evidence="1">Cytosol</location>
    </subcellularLocation>
</comment>
<comment type="similarity">
    <text evidence="2">Belongs to the enoyl-CoA hydratase/isomerase family.</text>
</comment>
<organism>
    <name type="scientific">Bos taurus</name>
    <name type="common">Bovine</name>
    <dbReference type="NCBI Taxonomy" id="9913"/>
    <lineage>
        <taxon>Eukaryota</taxon>
        <taxon>Metazoa</taxon>
        <taxon>Chordata</taxon>
        <taxon>Craniata</taxon>
        <taxon>Vertebrata</taxon>
        <taxon>Euteleostomi</taxon>
        <taxon>Mammalia</taxon>
        <taxon>Eutheria</taxon>
        <taxon>Laurasiatheria</taxon>
        <taxon>Artiodactyla</taxon>
        <taxon>Ruminantia</taxon>
        <taxon>Pecora</taxon>
        <taxon>Bovidae</taxon>
        <taxon>Bovinae</taxon>
        <taxon>Bos</taxon>
    </lineage>
</organism>
<keyword id="KW-0007">Acetylation</keyword>
<keyword id="KW-0963">Cytoplasm</keyword>
<keyword id="KW-0456">Lyase</keyword>
<keyword id="KW-1185">Reference proteome</keyword>
<feature type="chain" id="PRO_0000273245" description="Ethylmalonyl-CoA decarboxylase">
    <location>
        <begin position="1"/>
        <end position="306"/>
    </location>
</feature>
<feature type="modified residue" description="N6-acetyllysine; alternate" evidence="1">
    <location>
        <position position="216"/>
    </location>
</feature>
<feature type="modified residue" description="N6-succinyllysine; alternate" evidence="1">
    <location>
        <position position="216"/>
    </location>
</feature>
<feature type="sequence conflict" description="In Ref. 1; AAX46345." evidence="2" ref="1">
    <original>E</original>
    <variation>Q</variation>
    <location>
        <position position="176"/>
    </location>
</feature>
<gene>
    <name type="primary">ECHDC1</name>
</gene>
<name>ECHD1_BOVIN</name>
<proteinExistence type="evidence at transcript level"/>
<protein>
    <recommendedName>
        <fullName>Ethylmalonyl-CoA decarboxylase</fullName>
        <ecNumber evidence="1">4.1.1.94</ecNumber>
    </recommendedName>
    <alternativeName>
        <fullName>Enoyl-CoA hydratase domain-containing protein 1</fullName>
    </alternativeName>
    <alternativeName>
        <fullName>Methylmalonyl-CoA decarboxylase</fullName>
        <shortName>MMCD</shortName>
    </alternativeName>
</protein>
<accession>Q2HJD5</accession>
<accession>F1MDK4</accession>
<accession>Q58DU9</accession>
<reference key="1">
    <citation type="journal article" date="2005" name="BMC Genomics">
        <title>Characterization of 954 bovine full-CDS cDNA sequences.</title>
        <authorList>
            <person name="Harhay G.P."/>
            <person name="Sonstegard T.S."/>
            <person name="Keele J.W."/>
            <person name="Heaton M.P."/>
            <person name="Clawson M.L."/>
            <person name="Snelling W.M."/>
            <person name="Wiedmann R.T."/>
            <person name="Van Tassell C.P."/>
            <person name="Smith T.P.L."/>
        </authorList>
    </citation>
    <scope>NUCLEOTIDE SEQUENCE [LARGE SCALE MRNA]</scope>
</reference>
<reference key="2">
    <citation type="journal article" date="2009" name="Genome Biol.">
        <title>A whole-genome assembly of the domestic cow, Bos taurus.</title>
        <authorList>
            <person name="Zimin A.V."/>
            <person name="Delcher A.L."/>
            <person name="Florea L."/>
            <person name="Kelley D.R."/>
            <person name="Schatz M.C."/>
            <person name="Puiu D."/>
            <person name="Hanrahan F."/>
            <person name="Pertea G."/>
            <person name="Van Tassell C.P."/>
            <person name="Sonstegard T.S."/>
            <person name="Marcais G."/>
            <person name="Roberts M."/>
            <person name="Subramanian P."/>
            <person name="Yorke J.A."/>
            <person name="Salzberg S.L."/>
        </authorList>
    </citation>
    <scope>NUCLEOTIDE SEQUENCE [LARGE SCALE GENOMIC DNA]</scope>
    <source>
        <strain>Hereford</strain>
    </source>
</reference>
<reference key="3">
    <citation type="submission" date="2005-09" db="EMBL/GenBank/DDBJ databases">
        <authorList>
            <consortium name="NIH - Mammalian Gene Collection (MGC) project"/>
        </authorList>
    </citation>
    <scope>NUCLEOTIDE SEQUENCE [LARGE SCALE MRNA]</scope>
    <source>
        <strain>Hereford</strain>
        <tissue>Ascending colon</tissue>
    </source>
</reference>
<dbReference type="EC" id="4.1.1.94" evidence="1"/>
<dbReference type="EMBL" id="BT021498">
    <property type="protein sequence ID" value="AAX46345.1"/>
    <property type="molecule type" value="mRNA"/>
</dbReference>
<dbReference type="EMBL" id="DAAA02025518">
    <property type="status" value="NOT_ANNOTATED_CDS"/>
    <property type="molecule type" value="Genomic_DNA"/>
</dbReference>
<dbReference type="EMBL" id="BC105549">
    <property type="protein sequence ID" value="AAI05550.1"/>
    <property type="molecule type" value="mRNA"/>
</dbReference>
<dbReference type="RefSeq" id="NP_001030492.2">
    <property type="nucleotide sequence ID" value="NM_001035415.2"/>
</dbReference>
<dbReference type="SMR" id="Q2HJD5"/>
<dbReference type="FunCoup" id="Q2HJD5">
    <property type="interactions" value="827"/>
</dbReference>
<dbReference type="STRING" id="9913.ENSBTAP00000056819"/>
<dbReference type="PaxDb" id="9913-ENSBTAP00000005072"/>
<dbReference type="PeptideAtlas" id="Q2HJD5"/>
<dbReference type="Ensembl" id="ENSBTAT00000102882.1">
    <property type="protein sequence ID" value="ENSBTAP00000094129.1"/>
    <property type="gene ID" value="ENSBTAG00000003887.5"/>
</dbReference>
<dbReference type="GeneID" id="536284"/>
<dbReference type="KEGG" id="bta:536284"/>
<dbReference type="CTD" id="55862"/>
<dbReference type="VEuPathDB" id="HostDB:ENSBTAG00000003887"/>
<dbReference type="VGNC" id="VGNC:28306">
    <property type="gene designation" value="ECHDC1"/>
</dbReference>
<dbReference type="eggNOG" id="KOG1680">
    <property type="taxonomic scope" value="Eukaryota"/>
</dbReference>
<dbReference type="GeneTree" id="ENSGT00880000138038"/>
<dbReference type="InParanoid" id="Q2HJD5"/>
<dbReference type="OMA" id="FTICRPE"/>
<dbReference type="OrthoDB" id="448450at2759"/>
<dbReference type="Proteomes" id="UP000009136">
    <property type="component" value="Chromosome 9"/>
</dbReference>
<dbReference type="Bgee" id="ENSBTAG00000003887">
    <property type="expression patterns" value="Expressed in zone of skin and 106 other cell types or tissues"/>
</dbReference>
<dbReference type="GO" id="GO:0005829">
    <property type="term" value="C:cytosol"/>
    <property type="evidence" value="ECO:0000250"/>
    <property type="project" value="UniProtKB"/>
</dbReference>
<dbReference type="GO" id="GO:0016831">
    <property type="term" value="F:carboxy-lyase activity"/>
    <property type="evidence" value="ECO:0000250"/>
    <property type="project" value="UniProtKB"/>
</dbReference>
<dbReference type="GO" id="GO:0004492">
    <property type="term" value="F:methyl/ethyl malonyl-CoA decarboxylase activity"/>
    <property type="evidence" value="ECO:0007669"/>
    <property type="project" value="UniProtKB-EC"/>
</dbReference>
<dbReference type="GO" id="GO:0006635">
    <property type="term" value="P:fatty acid beta-oxidation"/>
    <property type="evidence" value="ECO:0000318"/>
    <property type="project" value="GO_Central"/>
</dbReference>
<dbReference type="CDD" id="cd06558">
    <property type="entry name" value="crotonase-like"/>
    <property type="match status" value="1"/>
</dbReference>
<dbReference type="FunFam" id="3.90.226.10:FF:000040">
    <property type="entry name" value="Ethylmalonyl-CoA decarboxylase 1"/>
    <property type="match status" value="1"/>
</dbReference>
<dbReference type="Gene3D" id="3.90.226.10">
    <property type="entry name" value="2-enoyl-CoA Hydratase, Chain A, domain 1"/>
    <property type="match status" value="1"/>
</dbReference>
<dbReference type="InterPro" id="IPR029045">
    <property type="entry name" value="ClpP/crotonase-like_dom_sf"/>
</dbReference>
<dbReference type="InterPro" id="IPR018376">
    <property type="entry name" value="Enoyl-CoA_hyd/isom_CS"/>
</dbReference>
<dbReference type="InterPro" id="IPR001753">
    <property type="entry name" value="Enoyl-CoA_hydra/iso"/>
</dbReference>
<dbReference type="PANTHER" id="PTHR11941">
    <property type="entry name" value="ENOYL-COA HYDRATASE-RELATED"/>
    <property type="match status" value="1"/>
</dbReference>
<dbReference type="PANTHER" id="PTHR11941:SF27">
    <property type="entry name" value="ETHYLMALONYL-COA DECARBOXYLASE"/>
    <property type="match status" value="1"/>
</dbReference>
<dbReference type="Pfam" id="PF00378">
    <property type="entry name" value="ECH_1"/>
    <property type="match status" value="1"/>
</dbReference>
<dbReference type="SUPFAM" id="SSF52096">
    <property type="entry name" value="ClpP/crotonase"/>
    <property type="match status" value="1"/>
</dbReference>
<dbReference type="PROSITE" id="PS00166">
    <property type="entry name" value="ENOYL_COA_HYDRATASE"/>
    <property type="match status" value="1"/>
</dbReference>
<evidence type="ECO:0000250" key="1">
    <source>
        <dbReference type="UniProtKB" id="Q9D9V3"/>
    </source>
</evidence>
<evidence type="ECO:0000305" key="2"/>
<sequence>MELKQEMASLLKTSPNAVKKRLLHQIGLSLYNTSHGFHEEEVKKKLEQFPGGSIDLQKENSGIGILTLNNPSKMNAFSGVMMLQLLEKVIELENWTEGKGLIIRGAKNTFSSGSDLNAVKALGTPEDGMAVCMFMQNTLTRFMRLPLISVALVQGRALGGGAEVTTACDFRLMTTESEIRFVHKEMGIIPSWGGATRLVEIIGGRQALKVLSGALKLDSEKALNIGMVDDILPSSDETECLKEAQEWLQQFIKGPPEVIRALKKSVSSCKELCLEEALQRERDILGTVWGGPANLEAVARKGKFNK</sequence>